<evidence type="ECO:0000255" key="1">
    <source>
        <dbReference type="HAMAP-Rule" id="MF_00134"/>
    </source>
</evidence>
<protein>
    <recommendedName>
        <fullName evidence="1">Indole-3-glycerol phosphate synthase</fullName>
        <shortName evidence="1">IGPS</shortName>
        <ecNumber evidence="1">4.1.1.48</ecNumber>
    </recommendedName>
</protein>
<proteinExistence type="inferred from homology"/>
<feature type="chain" id="PRO_1000095903" description="Indole-3-glycerol phosphate synthase">
    <location>
        <begin position="1"/>
        <end position="265"/>
    </location>
</feature>
<reference key="1">
    <citation type="submission" date="2006-10" db="EMBL/GenBank/DDBJ databases">
        <title>Complete sequence of Syntrophobacter fumaroxidans MPOB.</title>
        <authorList>
            <consortium name="US DOE Joint Genome Institute"/>
            <person name="Copeland A."/>
            <person name="Lucas S."/>
            <person name="Lapidus A."/>
            <person name="Barry K."/>
            <person name="Detter J.C."/>
            <person name="Glavina del Rio T."/>
            <person name="Hammon N."/>
            <person name="Israni S."/>
            <person name="Pitluck S."/>
            <person name="Goltsman E.G."/>
            <person name="Martinez M."/>
            <person name="Schmutz J."/>
            <person name="Larimer F."/>
            <person name="Land M."/>
            <person name="Hauser L."/>
            <person name="Kyrpides N."/>
            <person name="Kim E."/>
            <person name="Boone D.R."/>
            <person name="Brockman F."/>
            <person name="Culley D."/>
            <person name="Ferry J."/>
            <person name="Gunsalus R."/>
            <person name="McInerney M.J."/>
            <person name="Morrison M."/>
            <person name="Plugge C."/>
            <person name="Rohlin L."/>
            <person name="Scholten J."/>
            <person name="Sieber J."/>
            <person name="Stams A.J.M."/>
            <person name="Worm P."/>
            <person name="Henstra A.M."/>
            <person name="Richardson P."/>
        </authorList>
    </citation>
    <scope>NUCLEOTIDE SEQUENCE [LARGE SCALE GENOMIC DNA]</scope>
    <source>
        <strain>DSM 10017 / MPOB</strain>
    </source>
</reference>
<sequence>MSDFLSTILEEKKREVEQRKRTISEEFLEERSASAMERRSLCRALATPGRRGINIIAEVKRGSPSRGVMNPGLDAAQFARRYESCGAAAVSVLTDAGFFHGKAGDLRSARAAVKIPVLRKDFIVSRYQIFESAVMGADAVLLIVRAISPELLGECLRLCRRIGLDALVEVHSAEELDAASEAGAVLIGMNNRDLSTFTTDIRTSIQLVRRMRPGQVAVSESGIRCREQIDRLLDAGIWNFLIGESLVTAPEPEAVLAHLFGAYAA</sequence>
<keyword id="KW-0028">Amino-acid biosynthesis</keyword>
<keyword id="KW-0057">Aromatic amino acid biosynthesis</keyword>
<keyword id="KW-0210">Decarboxylase</keyword>
<keyword id="KW-0456">Lyase</keyword>
<keyword id="KW-1185">Reference proteome</keyword>
<keyword id="KW-0822">Tryptophan biosynthesis</keyword>
<gene>
    <name evidence="1" type="primary">trpC</name>
    <name type="ordered locus">Sfum_1773</name>
</gene>
<organism>
    <name type="scientific">Syntrophobacter fumaroxidans (strain DSM 10017 / MPOB)</name>
    <dbReference type="NCBI Taxonomy" id="335543"/>
    <lineage>
        <taxon>Bacteria</taxon>
        <taxon>Pseudomonadati</taxon>
        <taxon>Thermodesulfobacteriota</taxon>
        <taxon>Syntrophobacteria</taxon>
        <taxon>Syntrophobacterales</taxon>
        <taxon>Syntrophobacteraceae</taxon>
        <taxon>Syntrophobacter</taxon>
    </lineage>
</organism>
<name>TRPC_SYNFM</name>
<accession>A0LJ58</accession>
<comment type="catalytic activity">
    <reaction evidence="1">
        <text>1-(2-carboxyphenylamino)-1-deoxy-D-ribulose 5-phosphate + H(+) = (1S,2R)-1-C-(indol-3-yl)glycerol 3-phosphate + CO2 + H2O</text>
        <dbReference type="Rhea" id="RHEA:23476"/>
        <dbReference type="ChEBI" id="CHEBI:15377"/>
        <dbReference type="ChEBI" id="CHEBI:15378"/>
        <dbReference type="ChEBI" id="CHEBI:16526"/>
        <dbReference type="ChEBI" id="CHEBI:58613"/>
        <dbReference type="ChEBI" id="CHEBI:58866"/>
        <dbReference type="EC" id="4.1.1.48"/>
    </reaction>
</comment>
<comment type="pathway">
    <text evidence="1">Amino-acid biosynthesis; L-tryptophan biosynthesis; L-tryptophan from chorismate: step 4/5.</text>
</comment>
<comment type="similarity">
    <text evidence="1">Belongs to the TrpC family.</text>
</comment>
<dbReference type="EC" id="4.1.1.48" evidence="1"/>
<dbReference type="EMBL" id="CP000478">
    <property type="protein sequence ID" value="ABK17460.1"/>
    <property type="molecule type" value="Genomic_DNA"/>
</dbReference>
<dbReference type="RefSeq" id="WP_011698630.1">
    <property type="nucleotide sequence ID" value="NC_008554.1"/>
</dbReference>
<dbReference type="SMR" id="A0LJ58"/>
<dbReference type="STRING" id="335543.Sfum_1773"/>
<dbReference type="KEGG" id="sfu:Sfum_1773"/>
<dbReference type="eggNOG" id="COG0134">
    <property type="taxonomic scope" value="Bacteria"/>
</dbReference>
<dbReference type="HOGENOM" id="CLU_034247_2_0_7"/>
<dbReference type="InParanoid" id="A0LJ58"/>
<dbReference type="OrthoDB" id="9804217at2"/>
<dbReference type="UniPathway" id="UPA00035">
    <property type="reaction ID" value="UER00043"/>
</dbReference>
<dbReference type="Proteomes" id="UP000001784">
    <property type="component" value="Chromosome"/>
</dbReference>
<dbReference type="GO" id="GO:0004425">
    <property type="term" value="F:indole-3-glycerol-phosphate synthase activity"/>
    <property type="evidence" value="ECO:0007669"/>
    <property type="project" value="UniProtKB-UniRule"/>
</dbReference>
<dbReference type="GO" id="GO:0004640">
    <property type="term" value="F:phosphoribosylanthranilate isomerase activity"/>
    <property type="evidence" value="ECO:0007669"/>
    <property type="project" value="TreeGrafter"/>
</dbReference>
<dbReference type="GO" id="GO:0000162">
    <property type="term" value="P:L-tryptophan biosynthetic process"/>
    <property type="evidence" value="ECO:0007669"/>
    <property type="project" value="UniProtKB-UniRule"/>
</dbReference>
<dbReference type="CDD" id="cd00331">
    <property type="entry name" value="IGPS"/>
    <property type="match status" value="1"/>
</dbReference>
<dbReference type="FunFam" id="3.20.20.70:FF:000024">
    <property type="entry name" value="Indole-3-glycerol phosphate synthase"/>
    <property type="match status" value="1"/>
</dbReference>
<dbReference type="Gene3D" id="3.20.20.70">
    <property type="entry name" value="Aldolase class I"/>
    <property type="match status" value="1"/>
</dbReference>
<dbReference type="HAMAP" id="MF_00134_B">
    <property type="entry name" value="IGPS_B"/>
    <property type="match status" value="1"/>
</dbReference>
<dbReference type="InterPro" id="IPR013785">
    <property type="entry name" value="Aldolase_TIM"/>
</dbReference>
<dbReference type="InterPro" id="IPR045186">
    <property type="entry name" value="Indole-3-glycerol_P_synth"/>
</dbReference>
<dbReference type="InterPro" id="IPR013798">
    <property type="entry name" value="Indole-3-glycerol_P_synth_dom"/>
</dbReference>
<dbReference type="InterPro" id="IPR011060">
    <property type="entry name" value="RibuloseP-bd_barrel"/>
</dbReference>
<dbReference type="NCBIfam" id="NF001377">
    <property type="entry name" value="PRK00278.2-4"/>
    <property type="match status" value="1"/>
</dbReference>
<dbReference type="PANTHER" id="PTHR22854:SF2">
    <property type="entry name" value="INDOLE-3-GLYCEROL-PHOSPHATE SYNTHASE"/>
    <property type="match status" value="1"/>
</dbReference>
<dbReference type="PANTHER" id="PTHR22854">
    <property type="entry name" value="TRYPTOPHAN BIOSYNTHESIS PROTEIN"/>
    <property type="match status" value="1"/>
</dbReference>
<dbReference type="Pfam" id="PF00218">
    <property type="entry name" value="IGPS"/>
    <property type="match status" value="1"/>
</dbReference>
<dbReference type="SUPFAM" id="SSF51366">
    <property type="entry name" value="Ribulose-phoshate binding barrel"/>
    <property type="match status" value="1"/>
</dbReference>